<gene>
    <name evidence="1" type="primary">lipA</name>
    <name type="ordered locus">Mflv_2932</name>
</gene>
<proteinExistence type="inferred from homology"/>
<dbReference type="EC" id="2.8.1.8" evidence="1"/>
<dbReference type="EMBL" id="CP000656">
    <property type="protein sequence ID" value="ABP45409.1"/>
    <property type="molecule type" value="Genomic_DNA"/>
</dbReference>
<dbReference type="SMR" id="A4TBK7"/>
<dbReference type="STRING" id="350054.Mflv_2932"/>
<dbReference type="KEGG" id="mgi:Mflv_2932"/>
<dbReference type="eggNOG" id="COG0320">
    <property type="taxonomic scope" value="Bacteria"/>
</dbReference>
<dbReference type="HOGENOM" id="CLU_033144_2_1_11"/>
<dbReference type="OrthoDB" id="9787898at2"/>
<dbReference type="UniPathway" id="UPA00538">
    <property type="reaction ID" value="UER00593"/>
</dbReference>
<dbReference type="GO" id="GO:0005737">
    <property type="term" value="C:cytoplasm"/>
    <property type="evidence" value="ECO:0007669"/>
    <property type="project" value="UniProtKB-SubCell"/>
</dbReference>
<dbReference type="GO" id="GO:0051539">
    <property type="term" value="F:4 iron, 4 sulfur cluster binding"/>
    <property type="evidence" value="ECO:0007669"/>
    <property type="project" value="UniProtKB-UniRule"/>
</dbReference>
<dbReference type="GO" id="GO:0016992">
    <property type="term" value="F:lipoate synthase activity"/>
    <property type="evidence" value="ECO:0007669"/>
    <property type="project" value="UniProtKB-UniRule"/>
</dbReference>
<dbReference type="GO" id="GO:0046872">
    <property type="term" value="F:metal ion binding"/>
    <property type="evidence" value="ECO:0007669"/>
    <property type="project" value="UniProtKB-KW"/>
</dbReference>
<dbReference type="CDD" id="cd01335">
    <property type="entry name" value="Radical_SAM"/>
    <property type="match status" value="1"/>
</dbReference>
<dbReference type="FunFam" id="3.20.20.70:FF:000116">
    <property type="entry name" value="Lipoyl synthase"/>
    <property type="match status" value="1"/>
</dbReference>
<dbReference type="Gene3D" id="3.20.20.70">
    <property type="entry name" value="Aldolase class I"/>
    <property type="match status" value="1"/>
</dbReference>
<dbReference type="HAMAP" id="MF_00206">
    <property type="entry name" value="Lipoyl_synth"/>
    <property type="match status" value="1"/>
</dbReference>
<dbReference type="InterPro" id="IPR013785">
    <property type="entry name" value="Aldolase_TIM"/>
</dbReference>
<dbReference type="InterPro" id="IPR006638">
    <property type="entry name" value="Elp3/MiaA/NifB-like_rSAM"/>
</dbReference>
<dbReference type="InterPro" id="IPR031691">
    <property type="entry name" value="LIAS_N"/>
</dbReference>
<dbReference type="InterPro" id="IPR003698">
    <property type="entry name" value="Lipoyl_synth"/>
</dbReference>
<dbReference type="InterPro" id="IPR007197">
    <property type="entry name" value="rSAM"/>
</dbReference>
<dbReference type="NCBIfam" id="TIGR00510">
    <property type="entry name" value="lipA"/>
    <property type="match status" value="1"/>
</dbReference>
<dbReference type="NCBIfam" id="NF004019">
    <property type="entry name" value="PRK05481.1"/>
    <property type="match status" value="1"/>
</dbReference>
<dbReference type="NCBIfam" id="NF009544">
    <property type="entry name" value="PRK12928.1"/>
    <property type="match status" value="1"/>
</dbReference>
<dbReference type="PANTHER" id="PTHR10949">
    <property type="entry name" value="LIPOYL SYNTHASE"/>
    <property type="match status" value="1"/>
</dbReference>
<dbReference type="PANTHER" id="PTHR10949:SF0">
    <property type="entry name" value="LIPOYL SYNTHASE, MITOCHONDRIAL"/>
    <property type="match status" value="1"/>
</dbReference>
<dbReference type="Pfam" id="PF16881">
    <property type="entry name" value="LIAS_N"/>
    <property type="match status" value="1"/>
</dbReference>
<dbReference type="Pfam" id="PF04055">
    <property type="entry name" value="Radical_SAM"/>
    <property type="match status" value="1"/>
</dbReference>
<dbReference type="PIRSF" id="PIRSF005963">
    <property type="entry name" value="Lipoyl_synth"/>
    <property type="match status" value="1"/>
</dbReference>
<dbReference type="SFLD" id="SFLDF00271">
    <property type="entry name" value="lipoyl_synthase"/>
    <property type="match status" value="1"/>
</dbReference>
<dbReference type="SFLD" id="SFLDG01058">
    <property type="entry name" value="lipoyl_synthase_like"/>
    <property type="match status" value="1"/>
</dbReference>
<dbReference type="SMART" id="SM00729">
    <property type="entry name" value="Elp3"/>
    <property type="match status" value="1"/>
</dbReference>
<dbReference type="SUPFAM" id="SSF102114">
    <property type="entry name" value="Radical SAM enzymes"/>
    <property type="match status" value="1"/>
</dbReference>
<dbReference type="PROSITE" id="PS51918">
    <property type="entry name" value="RADICAL_SAM"/>
    <property type="match status" value="1"/>
</dbReference>
<accession>A4TBK7</accession>
<comment type="function">
    <text evidence="1">Catalyzes the radical-mediated insertion of two sulfur atoms into the C-6 and C-8 positions of the octanoyl moiety bound to the lipoyl domains of lipoate-dependent enzymes, thereby converting the octanoylated domains into lipoylated derivatives.</text>
</comment>
<comment type="catalytic activity">
    <reaction evidence="1">
        <text>[[Fe-S] cluster scaffold protein carrying a second [4Fe-4S](2+) cluster] + N(6)-octanoyl-L-lysyl-[protein] + 2 oxidized [2Fe-2S]-[ferredoxin] + 2 S-adenosyl-L-methionine + 4 H(+) = [[Fe-S] cluster scaffold protein] + N(6)-[(R)-dihydrolipoyl]-L-lysyl-[protein] + 4 Fe(3+) + 2 hydrogen sulfide + 2 5'-deoxyadenosine + 2 L-methionine + 2 reduced [2Fe-2S]-[ferredoxin]</text>
        <dbReference type="Rhea" id="RHEA:16585"/>
        <dbReference type="Rhea" id="RHEA-COMP:9928"/>
        <dbReference type="Rhea" id="RHEA-COMP:10000"/>
        <dbReference type="Rhea" id="RHEA-COMP:10001"/>
        <dbReference type="Rhea" id="RHEA-COMP:10475"/>
        <dbReference type="Rhea" id="RHEA-COMP:14568"/>
        <dbReference type="Rhea" id="RHEA-COMP:14569"/>
        <dbReference type="ChEBI" id="CHEBI:15378"/>
        <dbReference type="ChEBI" id="CHEBI:17319"/>
        <dbReference type="ChEBI" id="CHEBI:29034"/>
        <dbReference type="ChEBI" id="CHEBI:29919"/>
        <dbReference type="ChEBI" id="CHEBI:33722"/>
        <dbReference type="ChEBI" id="CHEBI:33737"/>
        <dbReference type="ChEBI" id="CHEBI:33738"/>
        <dbReference type="ChEBI" id="CHEBI:57844"/>
        <dbReference type="ChEBI" id="CHEBI:59789"/>
        <dbReference type="ChEBI" id="CHEBI:78809"/>
        <dbReference type="ChEBI" id="CHEBI:83100"/>
        <dbReference type="EC" id="2.8.1.8"/>
    </reaction>
</comment>
<comment type="cofactor">
    <cofactor evidence="1">
        <name>[4Fe-4S] cluster</name>
        <dbReference type="ChEBI" id="CHEBI:49883"/>
    </cofactor>
    <text evidence="1">Binds 2 [4Fe-4S] clusters per subunit. One cluster is coordinated with 3 cysteines and an exchangeable S-adenosyl-L-methionine.</text>
</comment>
<comment type="pathway">
    <text evidence="1">Protein modification; protein lipoylation via endogenous pathway; protein N(6)-(lipoyl)lysine from octanoyl-[acyl-carrier-protein]: step 2/2.</text>
</comment>
<comment type="subcellular location">
    <subcellularLocation>
        <location evidence="1">Cytoplasm</location>
    </subcellularLocation>
</comment>
<comment type="similarity">
    <text evidence="1">Belongs to the radical SAM superfamily. Lipoyl synthase family.</text>
</comment>
<name>LIPA_MYCGI</name>
<feature type="chain" id="PRO_1000077961" description="Lipoyl synthase">
    <location>
        <begin position="1"/>
        <end position="317"/>
    </location>
</feature>
<feature type="domain" description="Radical SAM core" evidence="2">
    <location>
        <begin position="67"/>
        <end position="281"/>
    </location>
</feature>
<feature type="binding site" evidence="1">
    <location>
        <position position="55"/>
    </location>
    <ligand>
        <name>[4Fe-4S] cluster</name>
        <dbReference type="ChEBI" id="CHEBI:49883"/>
        <label>1</label>
    </ligand>
</feature>
<feature type="binding site" evidence="1">
    <location>
        <position position="60"/>
    </location>
    <ligand>
        <name>[4Fe-4S] cluster</name>
        <dbReference type="ChEBI" id="CHEBI:49883"/>
        <label>1</label>
    </ligand>
</feature>
<feature type="binding site" evidence="1">
    <location>
        <position position="66"/>
    </location>
    <ligand>
        <name>[4Fe-4S] cluster</name>
        <dbReference type="ChEBI" id="CHEBI:49883"/>
        <label>1</label>
    </ligand>
</feature>
<feature type="binding site" evidence="1">
    <location>
        <position position="81"/>
    </location>
    <ligand>
        <name>[4Fe-4S] cluster</name>
        <dbReference type="ChEBI" id="CHEBI:49883"/>
        <label>2</label>
        <note>4Fe-4S-S-AdoMet</note>
    </ligand>
</feature>
<feature type="binding site" evidence="1">
    <location>
        <position position="85"/>
    </location>
    <ligand>
        <name>[4Fe-4S] cluster</name>
        <dbReference type="ChEBI" id="CHEBI:49883"/>
        <label>2</label>
        <note>4Fe-4S-S-AdoMet</note>
    </ligand>
</feature>
<feature type="binding site" evidence="1">
    <location>
        <position position="88"/>
    </location>
    <ligand>
        <name>[4Fe-4S] cluster</name>
        <dbReference type="ChEBI" id="CHEBI:49883"/>
        <label>2</label>
        <note>4Fe-4S-S-AdoMet</note>
    </ligand>
</feature>
<feature type="binding site" evidence="1">
    <location>
        <position position="292"/>
    </location>
    <ligand>
        <name>[4Fe-4S] cluster</name>
        <dbReference type="ChEBI" id="CHEBI:49883"/>
        <label>1</label>
    </ligand>
</feature>
<protein>
    <recommendedName>
        <fullName evidence="1">Lipoyl synthase</fullName>
        <ecNumber evidence="1">2.8.1.8</ecNumber>
    </recommendedName>
    <alternativeName>
        <fullName evidence="1">Lip-syn</fullName>
        <shortName evidence="1">LS</shortName>
    </alternativeName>
    <alternativeName>
        <fullName evidence="1">Lipoate synthase</fullName>
    </alternativeName>
    <alternativeName>
        <fullName evidence="1">Lipoic acid synthase</fullName>
    </alternativeName>
    <alternativeName>
        <fullName evidence="1">Sulfur insertion protein LipA</fullName>
    </alternativeName>
</protein>
<organism>
    <name type="scientific">Mycolicibacterium gilvum (strain PYR-GCK)</name>
    <name type="common">Mycobacterium gilvum (strain PYR-GCK)</name>
    <dbReference type="NCBI Taxonomy" id="350054"/>
    <lineage>
        <taxon>Bacteria</taxon>
        <taxon>Bacillati</taxon>
        <taxon>Actinomycetota</taxon>
        <taxon>Actinomycetes</taxon>
        <taxon>Mycobacteriales</taxon>
        <taxon>Mycobacteriaceae</taxon>
        <taxon>Mycolicibacterium</taxon>
    </lineage>
</organism>
<keyword id="KW-0004">4Fe-4S</keyword>
<keyword id="KW-0963">Cytoplasm</keyword>
<keyword id="KW-0408">Iron</keyword>
<keyword id="KW-0411">Iron-sulfur</keyword>
<keyword id="KW-0479">Metal-binding</keyword>
<keyword id="KW-0949">S-adenosyl-L-methionine</keyword>
<keyword id="KW-0808">Transferase</keyword>
<evidence type="ECO:0000255" key="1">
    <source>
        <dbReference type="HAMAP-Rule" id="MF_00206"/>
    </source>
</evidence>
<evidence type="ECO:0000255" key="2">
    <source>
        <dbReference type="PROSITE-ProRule" id="PRU01266"/>
    </source>
</evidence>
<reference key="1">
    <citation type="submission" date="2007-04" db="EMBL/GenBank/DDBJ databases">
        <title>Complete sequence of chromosome of Mycobacterium gilvum PYR-GCK.</title>
        <authorList>
            <consortium name="US DOE Joint Genome Institute"/>
            <person name="Copeland A."/>
            <person name="Lucas S."/>
            <person name="Lapidus A."/>
            <person name="Barry K."/>
            <person name="Detter J.C."/>
            <person name="Glavina del Rio T."/>
            <person name="Hammon N."/>
            <person name="Israni S."/>
            <person name="Dalin E."/>
            <person name="Tice H."/>
            <person name="Pitluck S."/>
            <person name="Chain P."/>
            <person name="Malfatti S."/>
            <person name="Shin M."/>
            <person name="Vergez L."/>
            <person name="Schmutz J."/>
            <person name="Larimer F."/>
            <person name="Land M."/>
            <person name="Hauser L."/>
            <person name="Kyrpides N."/>
            <person name="Mikhailova N."/>
            <person name="Miller C."/>
            <person name="Richardson P."/>
        </authorList>
    </citation>
    <scope>NUCLEOTIDE SEQUENCE [LARGE SCALE GENOMIC DNA]</scope>
    <source>
        <strain>PYR-GCK</strain>
    </source>
</reference>
<sequence length="317" mass="35584">MSIAPDGRKLLRLEVRNAETPIERKPPWIKTRAKMGPEYKELKALVRREGLHTVCEEAGCPNIFECWEDREATFLIGGEQCTRRCDFCQIDTGKPADLDRDEPRRVAESVQAMGLRYSTVTGVARDDLPDGGAWLYAETVRQIKALNPNTGVELLIPDFNADPDQLRAVFESRPEVLAHNVETVPRIFKRIRPGFRYERSLAVITAARDYGLVTKSNLILGMGETPEEVRAALHDLHDAGCDIVTITQYLRPSPRHHPVERWVHPDEFVDHERYATEIGFAGVLAGPLVRSSYRAGKLYAQTVAKRSAVSLSNGEIA</sequence>